<proteinExistence type="inferred from homology"/>
<geneLocation type="plasmid">
    <name>pTiC58</name>
</geneLocation>
<feature type="chain" id="PRO_0000060124" description="Nopaline transport system permease protein NocQ">
    <location>
        <begin position="1"/>
        <end position="236"/>
    </location>
</feature>
<feature type="transmembrane region" description="Helical" evidence="2">
    <location>
        <begin position="25"/>
        <end position="45"/>
    </location>
</feature>
<feature type="transmembrane region" description="Helical" evidence="2">
    <location>
        <begin position="63"/>
        <end position="83"/>
    </location>
</feature>
<feature type="transmembrane region" description="Helical" evidence="2">
    <location>
        <begin position="102"/>
        <end position="122"/>
    </location>
</feature>
<feature type="transmembrane region" description="Helical" evidence="2">
    <location>
        <begin position="199"/>
        <end position="219"/>
    </location>
</feature>
<feature type="domain" description="ABC transmembrane type-1" evidence="2">
    <location>
        <begin position="21"/>
        <end position="222"/>
    </location>
</feature>
<comment type="function">
    <text>Component of the nopaline active transport system probably consisting of four subunits: Q, M, P and T. This system is also capable of transporting octopine provided that catabolic functions are induced with nopaline.</text>
</comment>
<comment type="subcellular location">
    <subcellularLocation>
        <location evidence="1">Cell inner membrane</location>
        <topology evidence="2">Multi-pass membrane protein</topology>
    </subcellularLocation>
</comment>
<comment type="similarity">
    <text evidence="3">Belongs to the binding-protein-dependent transport system permease family. HisMQ subfamily.</text>
</comment>
<reference key="1">
    <citation type="journal article" date="1992" name="J. Bacteriol.">
        <title>Opine transport genes in the octopine (occ) and nopaline (noc) catabolic regions in Ti plasmids of Agrobacterium tumefaciens.</title>
        <authorList>
            <person name="Zanker H."/>
            <person name="von Lintig J."/>
            <person name="Schroeder J."/>
        </authorList>
    </citation>
    <scope>NUCLEOTIDE SEQUENCE [GENOMIC DNA]</scope>
</reference>
<reference key="2">
    <citation type="journal article" date="2001" name="Science">
        <title>The genome of the natural genetic engineer Agrobacterium tumefaciens C58.</title>
        <authorList>
            <person name="Wood D.W."/>
            <person name="Setubal J.C."/>
            <person name="Kaul R."/>
            <person name="Monks D.E."/>
            <person name="Kitajima J.P."/>
            <person name="Okura V.K."/>
            <person name="Zhou Y."/>
            <person name="Chen L."/>
            <person name="Wood G.E."/>
            <person name="Almeida N.F. Jr."/>
            <person name="Woo L."/>
            <person name="Chen Y."/>
            <person name="Paulsen I.T."/>
            <person name="Eisen J.A."/>
            <person name="Karp P.D."/>
            <person name="Bovee D. Sr."/>
            <person name="Chapman P."/>
            <person name="Clendenning J."/>
            <person name="Deatherage G."/>
            <person name="Gillet W."/>
            <person name="Grant C."/>
            <person name="Kutyavin T."/>
            <person name="Levy R."/>
            <person name="Li M.-J."/>
            <person name="McClelland E."/>
            <person name="Palmieri A."/>
            <person name="Raymond C."/>
            <person name="Rouse G."/>
            <person name="Saenphimmachak C."/>
            <person name="Wu Z."/>
            <person name="Romero P."/>
            <person name="Gordon D."/>
            <person name="Zhang S."/>
            <person name="Yoo H."/>
            <person name="Tao Y."/>
            <person name="Biddle P."/>
            <person name="Jung M."/>
            <person name="Krespan W."/>
            <person name="Perry M."/>
            <person name="Gordon-Kamm B."/>
            <person name="Liao L."/>
            <person name="Kim S."/>
            <person name="Hendrick C."/>
            <person name="Zhao Z.-Y."/>
            <person name="Dolan M."/>
            <person name="Chumley F."/>
            <person name="Tingey S.V."/>
            <person name="Tomb J.-F."/>
            <person name="Gordon M.P."/>
            <person name="Olson M.V."/>
            <person name="Nester E.W."/>
        </authorList>
    </citation>
    <scope>NUCLEOTIDE SEQUENCE [LARGE SCALE GENOMIC DNA]</scope>
</reference>
<reference key="3">
    <citation type="journal article" date="2001" name="Science">
        <title>Genome sequence of the plant pathogen and biotechnology agent Agrobacterium tumefaciens C58.</title>
        <authorList>
            <person name="Goodner B."/>
            <person name="Hinkle G."/>
            <person name="Gattung S."/>
            <person name="Miller N."/>
            <person name="Blanchard M."/>
            <person name="Qurollo B."/>
            <person name="Goldman B.S."/>
            <person name="Cao Y."/>
            <person name="Askenazi M."/>
            <person name="Halling C."/>
            <person name="Mullin L."/>
            <person name="Houmiel K."/>
            <person name="Gordon J."/>
            <person name="Vaudin M."/>
            <person name="Iartchouk O."/>
            <person name="Epp A."/>
            <person name="Liu F."/>
            <person name="Wollam C."/>
            <person name="Allinger M."/>
            <person name="Doughty D."/>
            <person name="Scott C."/>
            <person name="Lappas C."/>
            <person name="Markelz B."/>
            <person name="Flanagan C."/>
            <person name="Crowell C."/>
            <person name="Gurson J."/>
            <person name="Lomo C."/>
            <person name="Sear C."/>
            <person name="Strub G."/>
            <person name="Cielo C."/>
            <person name="Slater S."/>
        </authorList>
    </citation>
    <scope>NUCLEOTIDE SEQUENCE [LARGE SCALE GENOMIC DNA]</scope>
    <source>
        <strain>C58 / ATCC 33970</strain>
    </source>
</reference>
<sequence length="236" mass="25524">MDLTLLQWGDAGWGDELARGAMMTVVVAACSYFFGIIFGSLFAAAKLSRFWSLRLLGDVYTTVVRGVPELLIIFLVFFGGGTLLRTIANGLFGYEGYIEPPIFVIGVLCISVSAGAYATEVIRAAVLAVPPGQIEAAKSIGMGPWLRLRRVLIPQAARFALPGLGNVWQFTLKDTSLISVVGLVEIMRTAAMGAGSTKQPFTFYITAFVIFLLLSSVSNRGFLKAEKWANRGVRSQ</sequence>
<dbReference type="EMBL" id="M77785">
    <property type="protein sequence ID" value="AAA50512.1"/>
    <property type="molecule type" value="Genomic_DNA"/>
</dbReference>
<dbReference type="EMBL" id="AE007871">
    <property type="protein sequence ID" value="AAK90984.1"/>
    <property type="molecule type" value="Genomic_DNA"/>
</dbReference>
<dbReference type="PIR" id="AH3230">
    <property type="entry name" value="AH3230"/>
</dbReference>
<dbReference type="PIR" id="E42600">
    <property type="entry name" value="E42600"/>
</dbReference>
<dbReference type="RefSeq" id="NP_396543.1">
    <property type="nucleotide sequence ID" value="NC_003065.3"/>
</dbReference>
<dbReference type="RefSeq" id="WP_010891638.1">
    <property type="nucleotide sequence ID" value="NC_003065.3"/>
</dbReference>
<dbReference type="SMR" id="P35118"/>
<dbReference type="TCDB" id="3.A.1.3.6">
    <property type="family name" value="the atp-binding cassette (abc) superfamily"/>
</dbReference>
<dbReference type="EnsemblBacteria" id="AAK90984">
    <property type="protein sequence ID" value="AAK90984"/>
    <property type="gene ID" value="Atu6026"/>
</dbReference>
<dbReference type="GeneID" id="1137349"/>
<dbReference type="KEGG" id="atu:Atu6026"/>
<dbReference type="PATRIC" id="fig|176299.10.peg.5233"/>
<dbReference type="HOGENOM" id="CLU_019602_1_4_5"/>
<dbReference type="OrthoDB" id="9815029at2"/>
<dbReference type="PhylomeDB" id="P35118"/>
<dbReference type="BioCyc" id="AGRO:ATU6026-MONOMER"/>
<dbReference type="Proteomes" id="UP000000813">
    <property type="component" value="Plasmid Ti"/>
</dbReference>
<dbReference type="GO" id="GO:0043190">
    <property type="term" value="C:ATP-binding cassette (ABC) transporter complex"/>
    <property type="evidence" value="ECO:0007669"/>
    <property type="project" value="InterPro"/>
</dbReference>
<dbReference type="GO" id="GO:0022857">
    <property type="term" value="F:transmembrane transporter activity"/>
    <property type="evidence" value="ECO:0007669"/>
    <property type="project" value="InterPro"/>
</dbReference>
<dbReference type="CDD" id="cd06261">
    <property type="entry name" value="TM_PBP2"/>
    <property type="match status" value="1"/>
</dbReference>
<dbReference type="Gene3D" id="1.10.3720.10">
    <property type="entry name" value="MetI-like"/>
    <property type="match status" value="1"/>
</dbReference>
<dbReference type="InterPro" id="IPR010065">
    <property type="entry name" value="AA_ABC_transptr_permease_3TM"/>
</dbReference>
<dbReference type="InterPro" id="IPR051613">
    <property type="entry name" value="ABC_transp_permease_HisMQ"/>
</dbReference>
<dbReference type="InterPro" id="IPR000515">
    <property type="entry name" value="MetI-like"/>
</dbReference>
<dbReference type="InterPro" id="IPR035906">
    <property type="entry name" value="MetI-like_sf"/>
</dbReference>
<dbReference type="NCBIfam" id="TIGR01726">
    <property type="entry name" value="HEQRo_perm_3TM"/>
    <property type="match status" value="1"/>
</dbReference>
<dbReference type="PANTHER" id="PTHR30133">
    <property type="entry name" value="CATIONIC AMINO ACID TRANSPORTER, MEMBRANE COMPONENT"/>
    <property type="match status" value="1"/>
</dbReference>
<dbReference type="Pfam" id="PF00528">
    <property type="entry name" value="BPD_transp_1"/>
    <property type="match status" value="1"/>
</dbReference>
<dbReference type="SUPFAM" id="SSF161098">
    <property type="entry name" value="MetI-like"/>
    <property type="match status" value="1"/>
</dbReference>
<dbReference type="PROSITE" id="PS50928">
    <property type="entry name" value="ABC_TM1"/>
    <property type="match status" value="1"/>
</dbReference>
<protein>
    <recommendedName>
        <fullName>Nopaline transport system permease protein NocQ</fullName>
    </recommendedName>
</protein>
<accession>P35118</accession>
<name>NOCQ_AGRFC</name>
<keyword id="KW-0997">Cell inner membrane</keyword>
<keyword id="KW-1003">Cell membrane</keyword>
<keyword id="KW-0472">Membrane</keyword>
<keyword id="KW-0614">Plasmid</keyword>
<keyword id="KW-1185">Reference proteome</keyword>
<keyword id="KW-0812">Transmembrane</keyword>
<keyword id="KW-1133">Transmembrane helix</keyword>
<keyword id="KW-0813">Transport</keyword>
<evidence type="ECO:0000250" key="1"/>
<evidence type="ECO:0000255" key="2">
    <source>
        <dbReference type="PROSITE-ProRule" id="PRU00441"/>
    </source>
</evidence>
<evidence type="ECO:0000305" key="3"/>
<gene>
    <name type="primary">nocQ</name>
    <name type="ordered locus">Atu6026</name>
    <name type="ORF">AGR_pTi_66</name>
</gene>
<organism>
    <name type="scientific">Agrobacterium fabrum (strain C58 / ATCC 33970)</name>
    <name type="common">Agrobacterium tumefaciens (strain C58)</name>
    <dbReference type="NCBI Taxonomy" id="176299"/>
    <lineage>
        <taxon>Bacteria</taxon>
        <taxon>Pseudomonadati</taxon>
        <taxon>Pseudomonadota</taxon>
        <taxon>Alphaproteobacteria</taxon>
        <taxon>Hyphomicrobiales</taxon>
        <taxon>Rhizobiaceae</taxon>
        <taxon>Rhizobium/Agrobacterium group</taxon>
        <taxon>Agrobacterium</taxon>
        <taxon>Agrobacterium tumefaciens complex</taxon>
    </lineage>
</organism>